<gene>
    <name evidence="1" type="primary">hmgA</name>
    <name type="ordered locus">XOO4070</name>
</gene>
<evidence type="ECO:0000255" key="1">
    <source>
        <dbReference type="HAMAP-Rule" id="MF_00334"/>
    </source>
</evidence>
<organism>
    <name type="scientific">Xanthomonas oryzae pv. oryzae (strain KACC10331 / KXO85)</name>
    <dbReference type="NCBI Taxonomy" id="291331"/>
    <lineage>
        <taxon>Bacteria</taxon>
        <taxon>Pseudomonadati</taxon>
        <taxon>Pseudomonadota</taxon>
        <taxon>Gammaproteobacteria</taxon>
        <taxon>Lysobacterales</taxon>
        <taxon>Lysobacteraceae</taxon>
        <taxon>Xanthomonas</taxon>
    </lineage>
</organism>
<sequence length="441" mass="48506">MHNPQHYMTGFGNEFATEAVAGSLPVGQNSPQRVAHGLYAEQLSGTAFTAPRGENRRSWLYRIRPAAVHGRFSLIEQSRLHNDFGGGPVPPDQMRWSPLPLPATPTDFVDGLYTMAGNGSPEAMTGVAVHLYAANASMHGRFFYNADGELLLVPQLGRLRVCTELGVLELEPQQVGVIPRGVRFRVELLDSAARGYVCENFGGLLRLPDLGPIGANGLANPRDFETPRAAFEQRDGAFELVAKFQGDLWRADIDHSPLDVVAWHGNYAPYRYDLRRFNTIGSISFDHPDPSIFTVLTSPSDTHGTANMDFAIFPPRWLVAQHTFRPPWFHRNVASEFMGLVHGVYDAKAEGFAPGGASLHNCMSGHGPDAATFDKASQADLTRPDVIAETMAFMFETRAVLRPTQQALSAAHRQADYQQCWSGLRAAFQHPPAKNTTSVLR</sequence>
<protein>
    <recommendedName>
        <fullName evidence="1">Homogentisate 1,2-dioxygenase</fullName>
        <shortName evidence="1">HGDO</shortName>
        <ecNumber evidence="1">1.13.11.5</ecNumber>
    </recommendedName>
    <alternativeName>
        <fullName evidence="1">Homogentisate oxygenase</fullName>
    </alternativeName>
    <alternativeName>
        <fullName evidence="1">Homogentisic acid oxidase</fullName>
    </alternativeName>
    <alternativeName>
        <fullName evidence="1">Homogentisicase</fullName>
    </alternativeName>
</protein>
<accession>Q5GVE9</accession>
<dbReference type="EC" id="1.13.11.5" evidence="1"/>
<dbReference type="EMBL" id="AE013598">
    <property type="protein sequence ID" value="AAW77324.1"/>
    <property type="molecule type" value="Genomic_DNA"/>
</dbReference>
<dbReference type="SMR" id="Q5GVE9"/>
<dbReference type="STRING" id="291331.XOO4070"/>
<dbReference type="KEGG" id="xoo:XOO4070"/>
<dbReference type="HOGENOM" id="CLU_027174_0_0_6"/>
<dbReference type="UniPathway" id="UPA00139">
    <property type="reaction ID" value="UER00339"/>
</dbReference>
<dbReference type="Proteomes" id="UP000006735">
    <property type="component" value="Chromosome"/>
</dbReference>
<dbReference type="GO" id="GO:0005737">
    <property type="term" value="C:cytoplasm"/>
    <property type="evidence" value="ECO:0007669"/>
    <property type="project" value="TreeGrafter"/>
</dbReference>
<dbReference type="GO" id="GO:0004411">
    <property type="term" value="F:homogentisate 1,2-dioxygenase activity"/>
    <property type="evidence" value="ECO:0007669"/>
    <property type="project" value="UniProtKB-UniRule"/>
</dbReference>
<dbReference type="GO" id="GO:0005506">
    <property type="term" value="F:iron ion binding"/>
    <property type="evidence" value="ECO:0007669"/>
    <property type="project" value="UniProtKB-UniRule"/>
</dbReference>
<dbReference type="GO" id="GO:0006559">
    <property type="term" value="P:L-phenylalanine catabolic process"/>
    <property type="evidence" value="ECO:0007669"/>
    <property type="project" value="UniProtKB-UniRule"/>
</dbReference>
<dbReference type="GO" id="GO:0006572">
    <property type="term" value="P:tyrosine catabolic process"/>
    <property type="evidence" value="ECO:0007669"/>
    <property type="project" value="UniProtKB-UniRule"/>
</dbReference>
<dbReference type="CDD" id="cd07000">
    <property type="entry name" value="cupin_HGO_N"/>
    <property type="match status" value="1"/>
</dbReference>
<dbReference type="FunFam" id="2.60.120.10:FF:000053">
    <property type="entry name" value="Homogentisate 1,2-dioxygenase"/>
    <property type="match status" value="1"/>
</dbReference>
<dbReference type="Gene3D" id="2.60.120.10">
    <property type="entry name" value="Jelly Rolls"/>
    <property type="match status" value="1"/>
</dbReference>
<dbReference type="HAMAP" id="MF_00334">
    <property type="entry name" value="Homogentis_dioxygen"/>
    <property type="match status" value="1"/>
</dbReference>
<dbReference type="InterPro" id="IPR046451">
    <property type="entry name" value="HgmA_C"/>
</dbReference>
<dbReference type="InterPro" id="IPR046452">
    <property type="entry name" value="HgmA_N"/>
</dbReference>
<dbReference type="InterPro" id="IPR005708">
    <property type="entry name" value="Homogentis_dOase"/>
</dbReference>
<dbReference type="InterPro" id="IPR022950">
    <property type="entry name" value="Homogentis_dOase_bac"/>
</dbReference>
<dbReference type="InterPro" id="IPR014710">
    <property type="entry name" value="RmlC-like_jellyroll"/>
</dbReference>
<dbReference type="InterPro" id="IPR011051">
    <property type="entry name" value="RmlC_Cupin_sf"/>
</dbReference>
<dbReference type="NCBIfam" id="TIGR01015">
    <property type="entry name" value="hmgA"/>
    <property type="match status" value="1"/>
</dbReference>
<dbReference type="PANTHER" id="PTHR11056">
    <property type="entry name" value="HOMOGENTISATE 1,2-DIOXYGENASE"/>
    <property type="match status" value="1"/>
</dbReference>
<dbReference type="PANTHER" id="PTHR11056:SF0">
    <property type="entry name" value="HOMOGENTISATE 1,2-DIOXYGENASE"/>
    <property type="match status" value="1"/>
</dbReference>
<dbReference type="Pfam" id="PF04209">
    <property type="entry name" value="HgmA_C"/>
    <property type="match status" value="1"/>
</dbReference>
<dbReference type="Pfam" id="PF20510">
    <property type="entry name" value="HgmA_N"/>
    <property type="match status" value="1"/>
</dbReference>
<dbReference type="SUPFAM" id="SSF51182">
    <property type="entry name" value="RmlC-like cupins"/>
    <property type="match status" value="1"/>
</dbReference>
<reference key="1">
    <citation type="journal article" date="2005" name="Nucleic Acids Res.">
        <title>The genome sequence of Xanthomonas oryzae pathovar oryzae KACC10331, the bacterial blight pathogen of rice.</title>
        <authorList>
            <person name="Lee B.-M."/>
            <person name="Park Y.-J."/>
            <person name="Park D.-S."/>
            <person name="Kang H.-W."/>
            <person name="Kim J.-G."/>
            <person name="Song E.-S."/>
            <person name="Park I.-C."/>
            <person name="Yoon U.-H."/>
            <person name="Hahn J.-H."/>
            <person name="Koo B.-S."/>
            <person name="Lee G.-B."/>
            <person name="Kim H."/>
            <person name="Park H.-S."/>
            <person name="Yoon K.-O."/>
            <person name="Kim J.-H."/>
            <person name="Jung C.-H."/>
            <person name="Koh N.-H."/>
            <person name="Seo J.-S."/>
            <person name="Go S.-J."/>
        </authorList>
    </citation>
    <scope>NUCLEOTIDE SEQUENCE [LARGE SCALE GENOMIC DNA]</scope>
    <source>
        <strain>KACC10331 / KXO85</strain>
    </source>
</reference>
<feature type="chain" id="PRO_0000225798" description="Homogentisate 1,2-dioxygenase">
    <location>
        <begin position="1"/>
        <end position="441"/>
    </location>
</feature>
<feature type="active site" description="Proton acceptor" evidence="1">
    <location>
        <position position="287"/>
    </location>
</feature>
<feature type="binding site" evidence="1">
    <location>
        <position position="330"/>
    </location>
    <ligand>
        <name>Fe cation</name>
        <dbReference type="ChEBI" id="CHEBI:24875"/>
    </ligand>
</feature>
<feature type="binding site" evidence="1">
    <location>
        <position position="336"/>
    </location>
    <ligand>
        <name>Fe cation</name>
        <dbReference type="ChEBI" id="CHEBI:24875"/>
    </ligand>
</feature>
<feature type="binding site" evidence="1">
    <location>
        <position position="345"/>
    </location>
    <ligand>
        <name>homogentisate</name>
        <dbReference type="ChEBI" id="CHEBI:16169"/>
    </ligand>
</feature>
<feature type="binding site" evidence="1">
    <location>
        <position position="366"/>
    </location>
    <ligand>
        <name>Fe cation</name>
        <dbReference type="ChEBI" id="CHEBI:24875"/>
    </ligand>
</feature>
<feature type="binding site" evidence="1">
    <location>
        <position position="366"/>
    </location>
    <ligand>
        <name>homogentisate</name>
        <dbReference type="ChEBI" id="CHEBI:16169"/>
    </ligand>
</feature>
<name>HGD_XANOR</name>
<proteinExistence type="inferred from homology"/>
<comment type="function">
    <text evidence="1">Involved in the catabolism of homogentisate (2,5-dihydroxyphenylacetate or 2,5-OH-PhAc), a central intermediate in the degradation of phenylalanine and tyrosine. Catalyzes the oxidative ring cleavage of the aromatic ring of homogentisate to yield maleylacetoacetate.</text>
</comment>
<comment type="catalytic activity">
    <reaction evidence="1">
        <text>homogentisate + O2 = 4-maleylacetoacetate + H(+)</text>
        <dbReference type="Rhea" id="RHEA:15449"/>
        <dbReference type="ChEBI" id="CHEBI:15378"/>
        <dbReference type="ChEBI" id="CHEBI:15379"/>
        <dbReference type="ChEBI" id="CHEBI:16169"/>
        <dbReference type="ChEBI" id="CHEBI:17105"/>
        <dbReference type="EC" id="1.13.11.5"/>
    </reaction>
</comment>
<comment type="cofactor">
    <cofactor evidence="1">
        <name>Fe cation</name>
        <dbReference type="ChEBI" id="CHEBI:24875"/>
    </cofactor>
</comment>
<comment type="pathway">
    <text evidence="1">Amino-acid degradation; L-phenylalanine degradation; acetoacetate and fumarate from L-phenylalanine: step 4/6.</text>
</comment>
<comment type="subunit">
    <text evidence="1">Hexamer; dimer of trimers.</text>
</comment>
<comment type="similarity">
    <text evidence="1">Belongs to the homogentisate dioxygenase family.</text>
</comment>
<keyword id="KW-0223">Dioxygenase</keyword>
<keyword id="KW-0408">Iron</keyword>
<keyword id="KW-0479">Metal-binding</keyword>
<keyword id="KW-0560">Oxidoreductase</keyword>
<keyword id="KW-0585">Phenylalanine catabolism</keyword>
<keyword id="KW-1185">Reference proteome</keyword>
<keyword id="KW-0828">Tyrosine catabolism</keyword>